<comment type="similarity">
    <text evidence="4">Belongs to the TRAFAC class TrmE-Era-EngA-EngB-Septin-like GTPase superfamily. AIG1/Toc34/Toc159-like paraseptin GTPase family. IAN subfamily.</text>
</comment>
<keyword id="KW-0342">GTP-binding</keyword>
<keyword id="KW-0547">Nucleotide-binding</keyword>
<keyword id="KW-1185">Reference proteome</keyword>
<dbReference type="EMBL" id="AAFI02000013">
    <property type="protein sequence ID" value="EAL69471.1"/>
    <property type="molecule type" value="Genomic_DNA"/>
</dbReference>
<dbReference type="RefSeq" id="XP_643524.1">
    <property type="nucleotide sequence ID" value="XM_638432.1"/>
</dbReference>
<dbReference type="SMR" id="Q552Z6"/>
<dbReference type="FunCoup" id="Q552Z6">
    <property type="interactions" value="1"/>
</dbReference>
<dbReference type="STRING" id="44689.Q552Z6"/>
<dbReference type="PaxDb" id="44689-DDB0191350"/>
<dbReference type="EnsemblProtists" id="EAL69471">
    <property type="protein sequence ID" value="EAL69471"/>
    <property type="gene ID" value="DDB_G0275441"/>
</dbReference>
<dbReference type="GeneID" id="8620106"/>
<dbReference type="KEGG" id="ddi:DDB_G0275441"/>
<dbReference type="dictyBase" id="DDB_G0275441">
    <property type="gene designation" value="gtpA"/>
</dbReference>
<dbReference type="VEuPathDB" id="AmoebaDB:DDB_G0275441"/>
<dbReference type="eggNOG" id="ENOG502QSV2">
    <property type="taxonomic scope" value="Eukaryota"/>
</dbReference>
<dbReference type="HOGENOM" id="CLU_610345_0_0_1"/>
<dbReference type="InParanoid" id="Q552Z6"/>
<dbReference type="OMA" id="FTETRFD"/>
<dbReference type="PhylomeDB" id="Q552Z6"/>
<dbReference type="PRO" id="PR:Q552Z6"/>
<dbReference type="Proteomes" id="UP000002195">
    <property type="component" value="Chromosome 2"/>
</dbReference>
<dbReference type="GO" id="GO:0005525">
    <property type="term" value="F:GTP binding"/>
    <property type="evidence" value="ECO:0007669"/>
    <property type="project" value="UniProtKB-KW"/>
</dbReference>
<dbReference type="CDD" id="cd01853">
    <property type="entry name" value="Toc34_like"/>
    <property type="match status" value="1"/>
</dbReference>
<dbReference type="FunFam" id="3.40.50.300:FF:005099">
    <property type="entry name" value="GTP-binding protein A"/>
    <property type="match status" value="1"/>
</dbReference>
<dbReference type="Gene3D" id="3.40.50.300">
    <property type="entry name" value="P-loop containing nucleotide triphosphate hydrolases"/>
    <property type="match status" value="1"/>
</dbReference>
<dbReference type="InterPro" id="IPR006703">
    <property type="entry name" value="G_AIG1"/>
</dbReference>
<dbReference type="InterPro" id="IPR045058">
    <property type="entry name" value="GIMA/IAN/Toc"/>
</dbReference>
<dbReference type="InterPro" id="IPR027417">
    <property type="entry name" value="P-loop_NTPase"/>
</dbReference>
<dbReference type="PANTHER" id="PTHR10903:SF184">
    <property type="entry name" value="GTP-BINDING PROTEIN A"/>
    <property type="match status" value="1"/>
</dbReference>
<dbReference type="PANTHER" id="PTHR10903">
    <property type="entry name" value="GTPASE, IMAP FAMILY MEMBER-RELATED"/>
    <property type="match status" value="1"/>
</dbReference>
<dbReference type="Pfam" id="PF04548">
    <property type="entry name" value="AIG1"/>
    <property type="match status" value="1"/>
</dbReference>
<dbReference type="SUPFAM" id="SSF52540">
    <property type="entry name" value="P-loop containing nucleoside triphosphate hydrolases"/>
    <property type="match status" value="1"/>
</dbReference>
<dbReference type="PROSITE" id="PS51720">
    <property type="entry name" value="G_AIG1"/>
    <property type="match status" value="1"/>
</dbReference>
<gene>
    <name type="primary">gtpA</name>
    <name type="ORF">DDB_G0275441</name>
</gene>
<reference key="1">
    <citation type="journal article" date="2002" name="Nature">
        <title>Sequence and analysis of chromosome 2 of Dictyostelium discoideum.</title>
        <authorList>
            <person name="Gloeckner G."/>
            <person name="Eichinger L."/>
            <person name="Szafranski K."/>
            <person name="Pachebat J.A."/>
            <person name="Bankier A.T."/>
            <person name="Dear P.H."/>
            <person name="Lehmann R."/>
            <person name="Baumgart C."/>
            <person name="Parra G."/>
            <person name="Abril J.F."/>
            <person name="Guigo R."/>
            <person name="Kumpf K."/>
            <person name="Tunggal B."/>
            <person name="Cox E.C."/>
            <person name="Quail M.A."/>
            <person name="Platzer M."/>
            <person name="Rosenthal A."/>
            <person name="Noegel A.A."/>
        </authorList>
    </citation>
    <scope>NUCLEOTIDE SEQUENCE [LARGE SCALE GENOMIC DNA]</scope>
    <source>
        <strain>AX4</strain>
    </source>
</reference>
<reference key="2">
    <citation type="journal article" date="2005" name="Nature">
        <title>The genome of the social amoeba Dictyostelium discoideum.</title>
        <authorList>
            <person name="Eichinger L."/>
            <person name="Pachebat J.A."/>
            <person name="Gloeckner G."/>
            <person name="Rajandream M.A."/>
            <person name="Sucgang R."/>
            <person name="Berriman M."/>
            <person name="Song J."/>
            <person name="Olsen R."/>
            <person name="Szafranski K."/>
            <person name="Xu Q."/>
            <person name="Tunggal B."/>
            <person name="Kummerfeld S."/>
            <person name="Madera M."/>
            <person name="Konfortov B.A."/>
            <person name="Rivero F."/>
            <person name="Bankier A.T."/>
            <person name="Lehmann R."/>
            <person name="Hamlin N."/>
            <person name="Davies R."/>
            <person name="Gaudet P."/>
            <person name="Fey P."/>
            <person name="Pilcher K."/>
            <person name="Chen G."/>
            <person name="Saunders D."/>
            <person name="Sodergren E.J."/>
            <person name="Davis P."/>
            <person name="Kerhornou A."/>
            <person name="Nie X."/>
            <person name="Hall N."/>
            <person name="Anjard C."/>
            <person name="Hemphill L."/>
            <person name="Bason N."/>
            <person name="Farbrother P."/>
            <person name="Desany B."/>
            <person name="Just E."/>
            <person name="Morio T."/>
            <person name="Rost R."/>
            <person name="Churcher C.M."/>
            <person name="Cooper J."/>
            <person name="Haydock S."/>
            <person name="van Driessche N."/>
            <person name="Cronin A."/>
            <person name="Goodhead I."/>
            <person name="Muzny D.M."/>
            <person name="Mourier T."/>
            <person name="Pain A."/>
            <person name="Lu M."/>
            <person name="Harper D."/>
            <person name="Lindsay R."/>
            <person name="Hauser H."/>
            <person name="James K.D."/>
            <person name="Quiles M."/>
            <person name="Madan Babu M."/>
            <person name="Saito T."/>
            <person name="Buchrieser C."/>
            <person name="Wardroper A."/>
            <person name="Felder M."/>
            <person name="Thangavelu M."/>
            <person name="Johnson D."/>
            <person name="Knights A."/>
            <person name="Loulseged H."/>
            <person name="Mungall K.L."/>
            <person name="Oliver K."/>
            <person name="Price C."/>
            <person name="Quail M.A."/>
            <person name="Urushihara H."/>
            <person name="Hernandez J."/>
            <person name="Rabbinowitsch E."/>
            <person name="Steffen D."/>
            <person name="Sanders M."/>
            <person name="Ma J."/>
            <person name="Kohara Y."/>
            <person name="Sharp S."/>
            <person name="Simmonds M.N."/>
            <person name="Spiegler S."/>
            <person name="Tivey A."/>
            <person name="Sugano S."/>
            <person name="White B."/>
            <person name="Walker D."/>
            <person name="Woodward J.R."/>
            <person name="Winckler T."/>
            <person name="Tanaka Y."/>
            <person name="Shaulsky G."/>
            <person name="Schleicher M."/>
            <person name="Weinstock G.M."/>
            <person name="Rosenthal A."/>
            <person name="Cox E.C."/>
            <person name="Chisholm R.L."/>
            <person name="Gibbs R.A."/>
            <person name="Loomis W.F."/>
            <person name="Platzer M."/>
            <person name="Kay R.R."/>
            <person name="Williams J.G."/>
            <person name="Dear P.H."/>
            <person name="Noegel A.A."/>
            <person name="Barrell B.G."/>
            <person name="Kuspa A."/>
        </authorList>
    </citation>
    <scope>NUCLEOTIDE SEQUENCE [LARGE SCALE GENOMIC DNA]</scope>
    <source>
        <strain>AX4</strain>
    </source>
</reference>
<evidence type="ECO:0000255" key="1"/>
<evidence type="ECO:0000255" key="2">
    <source>
        <dbReference type="PROSITE-ProRule" id="PRU01057"/>
    </source>
</evidence>
<evidence type="ECO:0000256" key="3">
    <source>
        <dbReference type="SAM" id="MobiDB-lite"/>
    </source>
</evidence>
<evidence type="ECO:0000305" key="4"/>
<proteinExistence type="inferred from homology"/>
<protein>
    <recommendedName>
        <fullName>GTP-binding protein A</fullName>
    </recommendedName>
</protein>
<accession>Q552Z6</accession>
<accession>Q86H40</accession>
<name>GTPA_DICDI</name>
<feature type="chain" id="PRO_0000388642" description="GTP-binding protein A">
    <location>
        <begin position="1"/>
        <end position="449"/>
    </location>
</feature>
<feature type="domain" description="AIG1-type G" evidence="2">
    <location>
        <begin position="149"/>
        <end position="386"/>
    </location>
</feature>
<feature type="region of interest" description="Disordered" evidence="3">
    <location>
        <begin position="1"/>
        <end position="77"/>
    </location>
</feature>
<feature type="region of interest" description="G1" evidence="2">
    <location>
        <begin position="158"/>
        <end position="165"/>
    </location>
</feature>
<feature type="region of interest" description="G2" evidence="2">
    <location>
        <begin position="183"/>
        <end position="187"/>
    </location>
</feature>
<feature type="region of interest" description="G3" evidence="2">
    <location>
        <begin position="204"/>
        <end position="207"/>
    </location>
</feature>
<feature type="region of interest" description="G4" evidence="2">
    <location>
        <begin position="275"/>
        <end position="278"/>
    </location>
</feature>
<feature type="region of interest" description="G5" evidence="2">
    <location>
        <begin position="336"/>
        <end position="338"/>
    </location>
</feature>
<feature type="compositionally biased region" description="Low complexity" evidence="3">
    <location>
        <begin position="8"/>
        <end position="46"/>
    </location>
</feature>
<feature type="compositionally biased region" description="Low complexity" evidence="3">
    <location>
        <begin position="67"/>
        <end position="77"/>
    </location>
</feature>
<feature type="binding site" evidence="1">
    <location>
        <begin position="158"/>
        <end position="165"/>
    </location>
    <ligand>
        <name>GTP</name>
        <dbReference type="ChEBI" id="CHEBI:37565"/>
    </ligand>
</feature>
<sequence length="449" mass="49634">MFNINPYKSKTTKSSSSSSASPKSSKISNVSGSGSSSSSSSSSSSSSKDKDKDKRKKSFLKDDSVPSLSSKTENSLSLTSLSEITQSMTNTQTQTATDASMTAEDVSEIGEDYDPFLSILEEPGVDGATIEKETTEELQEMLAVLKGVQNECNVLLLGRTGVGKSSTLNTVFGIDIPVHSSESCTQDPFTYSRVVNGFKLNIIDTPGFLDSQGELVDSNNMIKIQRYLSGKTIHCVLFVEKFTETRFDGAHQLVINQFTEKLGPQLWRNAAVVLTYANSVLPDSCYDGFDEEDDVGPWKKHYEARALQFRKFFAGILAQLPQDDYPPKHIPVYAMENSRRCKRNEQGQRVLIDGTPCLHLLISGLLKMVDPKTAFLFMGHLRAKNKPGRGHRGDQNDRELSIMDNITEILKLFIVPPFDQLGKGTVAKILENWGKKLDKYGNLPNLLKI</sequence>
<organism>
    <name type="scientific">Dictyostelium discoideum</name>
    <name type="common">Social amoeba</name>
    <dbReference type="NCBI Taxonomy" id="44689"/>
    <lineage>
        <taxon>Eukaryota</taxon>
        <taxon>Amoebozoa</taxon>
        <taxon>Evosea</taxon>
        <taxon>Eumycetozoa</taxon>
        <taxon>Dictyostelia</taxon>
        <taxon>Dictyosteliales</taxon>
        <taxon>Dictyosteliaceae</taxon>
        <taxon>Dictyostelium</taxon>
    </lineage>
</organism>